<reference evidence="20 22" key="1">
    <citation type="journal article" date="1998" name="EMBO J.">
        <title>Xiro, a Xenopus homolog of the Drosophila Iroquois complex genes, controls development at the neural plate.</title>
        <authorList>
            <person name="Gomez-Skarmeta J.L."/>
            <person name="Glavic A."/>
            <person name="de la Calle-Mustienes E."/>
            <person name="Modolell J."/>
            <person name="Mayor R."/>
        </authorList>
    </citation>
    <scope>NUCLEOTIDE SEQUENCE [MRNA]</scope>
    <scope>TISSUE SPECIFICITY</scope>
    <source>
        <tissue evidence="17">Gastrula</tissue>
    </source>
</reference>
<reference evidence="21" key="2">
    <citation type="submission" date="2008-11" db="EMBL/GenBank/DDBJ databases">
        <authorList>
            <consortium name="NIH - Xenopus Gene Collection (XGC) project"/>
        </authorList>
    </citation>
    <scope>NUCLEOTIDE SEQUENCE [LARGE SCALE MRNA]</scope>
    <source>
        <tissue evidence="21">Gastrula</tissue>
    </source>
</reference>
<reference evidence="20" key="3">
    <citation type="journal article" date="2001" name="Development">
        <title>The Wnt-activated Xiro1 gene encodes a repressor that is essential for neural development and downregulates Bmp4.</title>
        <authorList>
            <person name="Gomez-Skarmeta J.L."/>
            <person name="de La Calle-Mustienes E."/>
            <person name="Modolell J."/>
        </authorList>
    </citation>
    <scope>FUNCTION</scope>
    <scope>TISSUE SPECIFICITY</scope>
    <scope>INDUCTION</scope>
</reference>
<reference evidence="20" key="4">
    <citation type="journal article" date="2001" name="Dev. Dyn.">
        <title>Xiro-1 controls mesoderm patterning by repressing bmp-4 expression in the Spemann organizer.</title>
        <authorList>
            <person name="Glavic A."/>
            <person name="Gomez-Skarmeta J.L."/>
            <person name="Mayor R."/>
        </authorList>
    </citation>
    <scope>FUNCTION</scope>
    <scope>TISSUE SPECIFICITY</scope>
</reference>
<reference evidence="20" key="5">
    <citation type="journal article" date="2002" name="Development">
        <title>The homeoprotein Xiro1 is required for midbrain-hindbrain boundary formation.</title>
        <authorList>
            <person name="Glavic A."/>
            <person name="Gomez-Skarmeta J.L."/>
            <person name="Mayor R."/>
        </authorList>
    </citation>
    <scope>FUNCTION</scope>
    <scope>TISSUE SPECIFICITY</scope>
</reference>
<reference evidence="20" key="6">
    <citation type="journal article" date="2002" name="Mech. Dev.">
        <title>The Xiro-repressed gene CoREST is expressed in Xenopus neural territories.</title>
        <authorList>
            <person name="de la Calle-Mustienes E."/>
            <person name="Modolell J."/>
            <person name="Gomez-Skarmeta J.L."/>
        </authorList>
    </citation>
    <scope>TISSUE SPECIFICITY</scope>
</reference>
<reference evidence="20" key="7">
    <citation type="journal article" date="2002" name="Mech. Dev.">
        <title>Xiro homeoproteins coordinate cell cycle exit and primary neuron formation by upregulating neuronal-fate repressors and downregulating the cell-cycle inhibitor XGadd45-gamma.</title>
        <authorList>
            <person name="de la Calle-Mustienes E."/>
            <person name="Glavic A."/>
            <person name="Modolell J."/>
            <person name="Gomez-Skarmeta J.L."/>
        </authorList>
    </citation>
    <scope>FUNCTION</scope>
</reference>
<reference evidence="20" key="8">
    <citation type="journal article" date="2003" name="Dev. Biol.">
        <title>Xenopus Xlmo4 is a GATA cofactor during ventral mesoderm formation and regulates Ldb1 availability at the dorsal mesoderm and the neural plate.</title>
        <authorList>
            <person name="de la Calle-Mustienes E."/>
            <person name="Lu Z."/>
            <person name="Cortes M."/>
            <person name="Andersen B."/>
            <person name="Modolell J."/>
            <person name="Gomez-Skarmeta J.L."/>
        </authorList>
    </citation>
    <scope>FUNCTION</scope>
    <scope>TISSUE SPECIFICITY</scope>
</reference>
<reference evidence="20" key="9">
    <citation type="journal article" date="2004" name="Development">
        <title>Interplay between Notch signaling and the homeoprotein Xiro1 is required for neural crest induction in Xenopus embryos.</title>
        <authorList>
            <person name="Glavic A."/>
            <person name="Silva F."/>
            <person name="Aybar M.J."/>
            <person name="Bastidas F."/>
            <person name="Mayor R."/>
        </authorList>
    </citation>
    <scope>FUNCTION</scope>
</reference>
<reference evidence="20" key="10">
    <citation type="journal article" date="2004" name="Dev. Biol.">
        <title>Molecular anatomy of placode development in Xenopus laevis.</title>
        <authorList>
            <person name="Schlosser G."/>
            <person name="Ahrens K."/>
        </authorList>
    </citation>
    <scope>TISSUE SPECIFICITY</scope>
</reference>
<reference evidence="20" key="11">
    <citation type="journal article" date="2004" name="Dev. Biol.">
        <title>Role of BMP signaling and the homeoprotein Iroquois in the specification of the cranial placodal field.</title>
        <authorList>
            <person name="Glavic A."/>
            <person name="Maris Honore S."/>
            <person name="Gloria Feijoo C."/>
            <person name="Bastidas F."/>
            <person name="Allende M.L."/>
            <person name="Mayor R."/>
        </authorList>
    </citation>
    <scope>FUNCTION</scope>
    <scope>TISSUE SPECIFICITY</scope>
</reference>
<reference evidence="20" key="12">
    <citation type="journal article" date="2007" name="Genes Dev.">
        <title>The prepattern transcription factor Irx3 directs nephron segment identity.</title>
        <authorList>
            <person name="Reggiani L."/>
            <person name="Raciti D."/>
            <person name="Airik R."/>
            <person name="Kispert A."/>
            <person name="Braendli A.W."/>
        </authorList>
    </citation>
    <scope>TISSUE SPECIFICITY</scope>
</reference>
<reference evidence="20" key="13">
    <citation type="journal article" date="2008" name="Development">
        <title>A dual requirement for Iroquois genes during Xenopus kidney development.</title>
        <authorList>
            <person name="Alarcon P."/>
            <person name="Rodriguez-Seguel E."/>
            <person name="Fernandez-Gonzalez A."/>
            <person name="Rubio R."/>
            <person name="Gomez-Skarmeta J.L."/>
        </authorList>
    </citation>
    <scope>FUNCTION</scope>
    <scope>TISSUE SPECIFICITY</scope>
    <scope>INDUCTION</scope>
</reference>
<reference evidence="20" key="14">
    <citation type="journal article" date="2009" name="Dev. Biol.">
        <title>foxD5 plays a critical upstream role in regulating neural ectodermal fate and the onset of neural differentiation.</title>
        <authorList>
            <person name="Yan B."/>
            <person name="Neilson K.M."/>
            <person name="Moody S.A."/>
        </authorList>
    </citation>
    <scope>INDUCTION</scope>
</reference>
<reference evidence="20" key="15">
    <citation type="journal article" date="2009" name="Dev. Biol.">
        <title>The Xenopus Irx genes are essential for neural patterning and define the border between prethalamus and thalamus through mutual antagonism with the anterior repressors Fezf and Arx.</title>
        <authorList>
            <person name="Rodriguez-Seguel E."/>
            <person name="Alarcon P."/>
            <person name="Gomez-Skarmeta J.L."/>
        </authorList>
    </citation>
    <scope>FUNCTION</scope>
    <scope>TISSUE SPECIFICITY</scope>
    <scope>INDUCTION</scope>
</reference>
<comment type="function">
    <text evidence="4 6 7 8 9 10 12 14 16">Acts partially redundantly with other irx members in neural patterning. Required for formation of the posterior forebrain, midbrain, hindbrain, and to a lesser extent, spinal cord. Acts early in neural plate development to induce expression of some but not all proneural genes, and specify a neural precursor state. Also up-regulates repressors that prevent neuronal differentiation. Patterns the neuroectoderm in both the anterior/posterior and dorsal/ventral axes. Acts primarily as a transcriptional repressor during neural development, and binds to the bmp4 promoter to repress gene expression and thus mediate down-regulation of bmp4 by wnt signaling. Controls multiple processes through bmp4-repression including neural plate development, neural crest specification and Spemann organizer development. Involved in the specification of the preplacodal field at the anterior border of the neural plate. Regulates the genetic cascade of interactions that are necessary for positioning the isthmus organizer and the formation of the midbrain-hindbrain boundary. Required during at least two stages of pronephros kidney development; during neurula stages, maintains transcription of key renal genes to define the size and identity of the pronephric anlage, probably in part through regulation of bmp-signaling. Subsequently required for proper formation of the intermediate tubule segment of the pronephros. Acts principally as a transcriptional activator during pronephros development.</text>
</comment>
<comment type="subcellular location">
    <subcellularLocation>
        <location evidence="1 20">Nucleus</location>
    </subcellularLocation>
</comment>
<comment type="tissue specificity">
    <text evidence="4 5 6 7 9 11 12 13 14 16 17">Expressed early in neural differentiation in the neural plate, and expression continues in the neural tube after neural fold closure. Expressed in the presumptive midbrain territory. Also expressed in the prospective neural crest and the preplacodal field, anterior to the neural plate. Strongly expressed in the profundal placode and weakly expressed in the trigeminal placode. Also expressed in the mesoderm in the Spemann organizer from the start of gastrulation, and subsequently in its derivatives; namely in the notochord as well as in the somites of stage 25 embryos, and the somites and notochord of tailbud embryos. Also expressed in specific and overlapping dynamic patterns with irx2 and irx3 during pronephric kidney development. Renal expression begins in the dorsal region of the pronephric anlage at mid neurula stage and continues to at least tailbud stages where expression is confined to the intermediate tubule segment IT1. Renal expression is maintained at tadpole stages.</text>
</comment>
<comment type="induction">
    <text evidence="4 14 15 16">By wnt signaling. Mutually antagonizes bmp4 signaling. Inhibited in the neural plate by foxd5. The anterior limit of expression at the future border between the prethalamus and thalamus is defined by mutual repression with the anterior repressor fezf2, and also by arx. Induced by retinoic acid (RA) during kidney development.</text>
</comment>
<comment type="similarity">
    <text evidence="1">Belongs to the TALE/IRO homeobox family.</text>
</comment>
<comment type="caution">
    <text evidence="20">Although PubMed:17875669 show that irx1 is dispensable for pronephric kidney development, PubMed:18715948 show that irx1 is required for formation of the pronephros.</text>
</comment>
<name>IRX1A_XENLA</name>
<accession>Q9YGK8</accession>
<dbReference type="EMBL" id="AJ001834">
    <property type="protein sequence ID" value="CAB38329.1"/>
    <property type="molecule type" value="mRNA"/>
</dbReference>
<dbReference type="EMBL" id="BC169342">
    <property type="protein sequence ID" value="AAI69342.1"/>
    <property type="molecule type" value="mRNA"/>
</dbReference>
<dbReference type="EMBL" id="BC169344">
    <property type="protein sequence ID" value="AAI69344.1"/>
    <property type="molecule type" value="mRNA"/>
</dbReference>
<dbReference type="RefSeq" id="NP_001081649.1">
    <property type="nucleotide sequence ID" value="NM_001088180.2"/>
</dbReference>
<dbReference type="SMR" id="Q9YGK8"/>
<dbReference type="GeneID" id="397976"/>
<dbReference type="KEGG" id="xla:397976"/>
<dbReference type="AGR" id="Xenbase:XB-GENE-865648"/>
<dbReference type="CTD" id="397976"/>
<dbReference type="Xenbase" id="XB-GENE-865648">
    <property type="gene designation" value="irx1.L"/>
</dbReference>
<dbReference type="OMA" id="QVNHTST"/>
<dbReference type="OrthoDB" id="5399138at2759"/>
<dbReference type="Proteomes" id="UP000186698">
    <property type="component" value="Chromosome 6L"/>
</dbReference>
<dbReference type="Bgee" id="397976">
    <property type="expression patterns" value="Expressed in lung and 13 other cell types or tissues"/>
</dbReference>
<dbReference type="GO" id="GO:0005634">
    <property type="term" value="C:nucleus"/>
    <property type="evidence" value="ECO:0000250"/>
    <property type="project" value="UniProtKB"/>
</dbReference>
<dbReference type="GO" id="GO:0000981">
    <property type="term" value="F:DNA-binding transcription factor activity, RNA polymerase II-specific"/>
    <property type="evidence" value="ECO:0000318"/>
    <property type="project" value="GO_Central"/>
</dbReference>
<dbReference type="GO" id="GO:0000978">
    <property type="term" value="F:RNA polymerase II cis-regulatory region sequence-specific DNA binding"/>
    <property type="evidence" value="ECO:0000318"/>
    <property type="project" value="GO_Central"/>
</dbReference>
<dbReference type="GO" id="GO:0000976">
    <property type="term" value="F:transcription cis-regulatory region binding"/>
    <property type="evidence" value="ECO:0000314"/>
    <property type="project" value="UniProtKB"/>
</dbReference>
<dbReference type="GO" id="GO:0007420">
    <property type="term" value="P:brain development"/>
    <property type="evidence" value="ECO:0000315"/>
    <property type="project" value="UniProtKB"/>
</dbReference>
<dbReference type="GO" id="GO:0048468">
    <property type="term" value="P:cell development"/>
    <property type="evidence" value="ECO:0000318"/>
    <property type="project" value="GO_Central"/>
</dbReference>
<dbReference type="GO" id="GO:0001708">
    <property type="term" value="P:cell fate specification"/>
    <property type="evidence" value="ECO:0000315"/>
    <property type="project" value="UniProtKB"/>
</dbReference>
<dbReference type="GO" id="GO:0009953">
    <property type="term" value="P:dorsal/ventral pattern formation"/>
    <property type="evidence" value="ECO:0000315"/>
    <property type="project" value="UniProtKB"/>
</dbReference>
<dbReference type="GO" id="GO:0071696">
    <property type="term" value="P:ectodermal placode development"/>
    <property type="evidence" value="ECO:0000315"/>
    <property type="project" value="Xenbase"/>
</dbReference>
<dbReference type="GO" id="GO:0072005">
    <property type="term" value="P:maintenance of kidney identity"/>
    <property type="evidence" value="ECO:0000315"/>
    <property type="project" value="UniProtKB"/>
</dbReference>
<dbReference type="GO" id="GO:0007498">
    <property type="term" value="P:mesoderm development"/>
    <property type="evidence" value="ECO:0000315"/>
    <property type="project" value="UniProtKB"/>
</dbReference>
<dbReference type="GO" id="GO:0030917">
    <property type="term" value="P:midbrain-hindbrain boundary development"/>
    <property type="evidence" value="ECO:0000315"/>
    <property type="project" value="UniProtKB"/>
</dbReference>
<dbReference type="GO" id="GO:0030514">
    <property type="term" value="P:negative regulation of BMP signaling pathway"/>
    <property type="evidence" value="ECO:0000315"/>
    <property type="project" value="UniProtKB"/>
</dbReference>
<dbReference type="GO" id="GO:0045892">
    <property type="term" value="P:negative regulation of DNA-templated transcription"/>
    <property type="evidence" value="ECO:0000314"/>
    <property type="project" value="UniProtKB"/>
</dbReference>
<dbReference type="GO" id="GO:0045665">
    <property type="term" value="P:negative regulation of neuron differentiation"/>
    <property type="evidence" value="ECO:0000315"/>
    <property type="project" value="UniProtKB"/>
</dbReference>
<dbReference type="GO" id="GO:0000122">
    <property type="term" value="P:negative regulation of transcription by RNA polymerase II"/>
    <property type="evidence" value="ECO:0000314"/>
    <property type="project" value="UniProtKB"/>
</dbReference>
<dbReference type="GO" id="GO:0014036">
    <property type="term" value="P:neural crest cell fate specification"/>
    <property type="evidence" value="ECO:0000315"/>
    <property type="project" value="UniProtKB"/>
</dbReference>
<dbReference type="GO" id="GO:0022008">
    <property type="term" value="P:neurogenesis"/>
    <property type="evidence" value="ECO:0000315"/>
    <property type="project" value="UniProtKB"/>
</dbReference>
<dbReference type="GO" id="GO:0030182">
    <property type="term" value="P:neuron differentiation"/>
    <property type="evidence" value="ECO:0000318"/>
    <property type="project" value="GO_Central"/>
</dbReference>
<dbReference type="GO" id="GO:0030916">
    <property type="term" value="P:otic vesicle formation"/>
    <property type="evidence" value="ECO:0000315"/>
    <property type="project" value="Xenbase"/>
</dbReference>
<dbReference type="GO" id="GO:0045893">
    <property type="term" value="P:positive regulation of DNA-templated transcription"/>
    <property type="evidence" value="ECO:0000314"/>
    <property type="project" value="UniProtKB"/>
</dbReference>
<dbReference type="GO" id="GO:0045666">
    <property type="term" value="P:positive regulation of neuron differentiation"/>
    <property type="evidence" value="ECO:0000315"/>
    <property type="project" value="UniProtKB"/>
</dbReference>
<dbReference type="GO" id="GO:0045944">
    <property type="term" value="P:positive regulation of transcription by RNA polymerase II"/>
    <property type="evidence" value="ECO:0000314"/>
    <property type="project" value="UniProtKB"/>
</dbReference>
<dbReference type="GO" id="GO:0009954">
    <property type="term" value="P:proximal/distal pattern formation"/>
    <property type="evidence" value="ECO:0000315"/>
    <property type="project" value="UniProtKB"/>
</dbReference>
<dbReference type="GO" id="GO:0072196">
    <property type="term" value="P:proximal/distal pattern formation involved in pronephric nephron development"/>
    <property type="evidence" value="ECO:0000315"/>
    <property type="project" value="UniProtKB"/>
</dbReference>
<dbReference type="GO" id="GO:0006357">
    <property type="term" value="P:regulation of transcription by RNA polymerase II"/>
    <property type="evidence" value="ECO:0000318"/>
    <property type="project" value="GO_Central"/>
</dbReference>
<dbReference type="GO" id="GO:0039005">
    <property type="term" value="P:specification of pronephric tubule identity"/>
    <property type="evidence" value="ECO:0000315"/>
    <property type="project" value="UniProtKB"/>
</dbReference>
<dbReference type="GO" id="GO:0060062">
    <property type="term" value="P:Spemann organizer formation at the dorsal lip of the blastopore"/>
    <property type="evidence" value="ECO:0000315"/>
    <property type="project" value="UniProtKB"/>
</dbReference>
<dbReference type="CDD" id="cd00086">
    <property type="entry name" value="homeodomain"/>
    <property type="match status" value="1"/>
</dbReference>
<dbReference type="FunFam" id="1.10.10.60:FF:000003">
    <property type="entry name" value="Iroquois-class homeobox protein IRX"/>
    <property type="match status" value="1"/>
</dbReference>
<dbReference type="Gene3D" id="1.10.10.60">
    <property type="entry name" value="Homeodomain-like"/>
    <property type="match status" value="1"/>
</dbReference>
<dbReference type="InterPro" id="IPR001356">
    <property type="entry name" value="HD"/>
</dbReference>
<dbReference type="InterPro" id="IPR017970">
    <property type="entry name" value="Homeobox_CS"/>
</dbReference>
<dbReference type="InterPro" id="IPR009057">
    <property type="entry name" value="Homeodomain-like_sf"/>
</dbReference>
<dbReference type="InterPro" id="IPR003893">
    <property type="entry name" value="Iroquois_homeo"/>
</dbReference>
<dbReference type="InterPro" id="IPR008422">
    <property type="entry name" value="KN_HD"/>
</dbReference>
<dbReference type="PANTHER" id="PTHR11211">
    <property type="entry name" value="IROQUOIS-CLASS HOMEODOMAIN PROTEIN IRX"/>
    <property type="match status" value="1"/>
</dbReference>
<dbReference type="PANTHER" id="PTHR11211:SF13">
    <property type="entry name" value="IROQUOIS-CLASS HOMEODOMAIN PROTEIN IRX-1"/>
    <property type="match status" value="1"/>
</dbReference>
<dbReference type="Pfam" id="PF05920">
    <property type="entry name" value="Homeobox_KN"/>
    <property type="match status" value="1"/>
</dbReference>
<dbReference type="SMART" id="SM00389">
    <property type="entry name" value="HOX"/>
    <property type="match status" value="1"/>
</dbReference>
<dbReference type="SMART" id="SM00548">
    <property type="entry name" value="IRO"/>
    <property type="match status" value="1"/>
</dbReference>
<dbReference type="SUPFAM" id="SSF46689">
    <property type="entry name" value="Homeodomain-like"/>
    <property type="match status" value="1"/>
</dbReference>
<dbReference type="PROSITE" id="PS00027">
    <property type="entry name" value="HOMEOBOX_1"/>
    <property type="match status" value="1"/>
</dbReference>
<dbReference type="PROSITE" id="PS50071">
    <property type="entry name" value="HOMEOBOX_2"/>
    <property type="match status" value="1"/>
</dbReference>
<feature type="chain" id="PRO_0000388713" description="Iroquois-class homeodomain protein irx-1-A">
    <location>
        <begin position="1"/>
        <end position="467"/>
    </location>
</feature>
<feature type="DNA-binding region" description="Homeobox; TALE-type" evidence="2">
    <location>
        <begin position="126"/>
        <end position="188"/>
    </location>
</feature>
<feature type="region of interest" description="Disordered" evidence="3">
    <location>
        <begin position="197"/>
        <end position="306"/>
    </location>
</feature>
<feature type="region of interest" description="Disordered" evidence="3">
    <location>
        <begin position="318"/>
        <end position="344"/>
    </location>
</feature>
<feature type="region of interest" description="Disordered" evidence="3">
    <location>
        <begin position="410"/>
        <end position="467"/>
    </location>
</feature>
<feature type="compositionally biased region" description="Acidic residues" evidence="3">
    <location>
        <begin position="215"/>
        <end position="225"/>
    </location>
</feature>
<feature type="compositionally biased region" description="Acidic residues" evidence="3">
    <location>
        <begin position="233"/>
        <end position="244"/>
    </location>
</feature>
<feature type="compositionally biased region" description="Basic and acidic residues" evidence="3">
    <location>
        <begin position="245"/>
        <end position="262"/>
    </location>
</feature>
<feature type="compositionally biased region" description="Basic and acidic residues" evidence="3">
    <location>
        <begin position="415"/>
        <end position="431"/>
    </location>
</feature>
<feature type="compositionally biased region" description="Polar residues" evidence="3">
    <location>
        <begin position="447"/>
        <end position="460"/>
    </location>
</feature>
<organism>
    <name type="scientific">Xenopus laevis</name>
    <name type="common">African clawed frog</name>
    <dbReference type="NCBI Taxonomy" id="8355"/>
    <lineage>
        <taxon>Eukaryota</taxon>
        <taxon>Metazoa</taxon>
        <taxon>Chordata</taxon>
        <taxon>Craniata</taxon>
        <taxon>Vertebrata</taxon>
        <taxon>Euteleostomi</taxon>
        <taxon>Amphibia</taxon>
        <taxon>Batrachia</taxon>
        <taxon>Anura</taxon>
        <taxon>Pipoidea</taxon>
        <taxon>Pipidae</taxon>
        <taxon>Xenopodinae</taxon>
        <taxon>Xenopus</taxon>
        <taxon>Xenopus</taxon>
    </lineage>
</organism>
<protein>
    <recommendedName>
        <fullName>Iroquois-class homeodomain protein irx-1-A</fullName>
    </recommendedName>
    <alternativeName>
        <fullName>Iroquois homeobox protein 1-A</fullName>
        <shortName evidence="18">Xiro-1</shortName>
        <shortName evidence="19">Xiro1</shortName>
    </alternativeName>
</protein>
<sequence length="467" mass="50658">MSFPQLGYPQYLTAGQAAVYGGERPGVLAAAAAAAAAAAAAGSGRPTGAELGSSSTAAVTSVLGMYASPYSAPNYSAFLPYTTDLTLFSQMGSQYELKDNPGVHPATFAAHTTPGYYPYGQFQYGDPGRPKNATRESTGTLKAWLNEHRKNPYPTKGEKIMLAIITKMTLTQVSTWFANARRRLKKENKVTWGARSKEDDNIFGSDNEGDHEKNEDDEEIDLESIDIDKIDDNDGEQSNEEEDEKLEHLRQGEKESLKKESEVMIPSSDGLKPKDSMSLGKESSDTSNTRIVSPGGQGNIQVPPHSKPKIWSLAETATSPDGALKSSPPPSQGNHTSPPIQHPAFLPSHGLYTCQIGKFHNWTNGAFLTQSSLINMRSLLGVNPHHAAHHNHHHLQAHQQAPFLATNLSSLSSDKTPERTSPKHSDRENVPRTDSPPQLKPSFQAVRENTLSQQEGTSRILTALPSA</sequence>
<gene>
    <name type="primary">irx1-a</name>
    <name evidence="19" type="synonym">iro1</name>
    <name type="synonym">iro1-a</name>
    <name type="synonym">irx1</name>
</gene>
<keyword id="KW-0010">Activator</keyword>
<keyword id="KW-0217">Developmental protein</keyword>
<keyword id="KW-0221">Differentiation</keyword>
<keyword id="KW-0238">DNA-binding</keyword>
<keyword id="KW-0371">Homeobox</keyword>
<keyword id="KW-0524">Neurogenesis</keyword>
<keyword id="KW-0539">Nucleus</keyword>
<keyword id="KW-1185">Reference proteome</keyword>
<keyword id="KW-0678">Repressor</keyword>
<keyword id="KW-0804">Transcription</keyword>
<keyword id="KW-0805">Transcription regulation</keyword>
<evidence type="ECO:0000255" key="1"/>
<evidence type="ECO:0000255" key="2">
    <source>
        <dbReference type="PROSITE-ProRule" id="PRU00108"/>
    </source>
</evidence>
<evidence type="ECO:0000256" key="3">
    <source>
        <dbReference type="SAM" id="MobiDB-lite"/>
    </source>
</evidence>
<evidence type="ECO:0000269" key="4">
    <source>
    </source>
</evidence>
<evidence type="ECO:0000269" key="5">
    <source>
    </source>
</evidence>
<evidence type="ECO:0000269" key="6">
    <source>
    </source>
</evidence>
<evidence type="ECO:0000269" key="7">
    <source>
    </source>
</evidence>
<evidence type="ECO:0000269" key="8">
    <source>
    </source>
</evidence>
<evidence type="ECO:0000269" key="9">
    <source>
    </source>
</evidence>
<evidence type="ECO:0000269" key="10">
    <source>
    </source>
</evidence>
<evidence type="ECO:0000269" key="11">
    <source>
    </source>
</evidence>
<evidence type="ECO:0000269" key="12">
    <source>
    </source>
</evidence>
<evidence type="ECO:0000269" key="13">
    <source>
    </source>
</evidence>
<evidence type="ECO:0000269" key="14">
    <source>
    </source>
</evidence>
<evidence type="ECO:0000269" key="15">
    <source>
    </source>
</evidence>
<evidence type="ECO:0000269" key="16">
    <source>
    </source>
</evidence>
<evidence type="ECO:0000269" key="17">
    <source>
    </source>
</evidence>
<evidence type="ECO:0000303" key="18">
    <source>
    </source>
</evidence>
<evidence type="ECO:0000303" key="19">
    <source>
    </source>
</evidence>
<evidence type="ECO:0000305" key="20"/>
<evidence type="ECO:0000312" key="21">
    <source>
        <dbReference type="EMBL" id="AAI69342.1"/>
    </source>
</evidence>
<evidence type="ECO:0000312" key="22">
    <source>
        <dbReference type="EMBL" id="CAB38329.1"/>
    </source>
</evidence>
<proteinExistence type="evidence at transcript level"/>